<accession>A3N6K4</accession>
<organism>
    <name type="scientific">Burkholderia pseudomallei (strain 668)</name>
    <dbReference type="NCBI Taxonomy" id="320373"/>
    <lineage>
        <taxon>Bacteria</taxon>
        <taxon>Pseudomonadati</taxon>
        <taxon>Pseudomonadota</taxon>
        <taxon>Betaproteobacteria</taxon>
        <taxon>Burkholderiales</taxon>
        <taxon>Burkholderiaceae</taxon>
        <taxon>Burkholderia</taxon>
        <taxon>pseudomallei group</taxon>
    </lineage>
</organism>
<protein>
    <recommendedName>
        <fullName evidence="1">Adenylate kinase</fullName>
        <shortName evidence="1">AK</shortName>
        <ecNumber evidence="1">2.7.4.3</ecNumber>
    </recommendedName>
    <alternativeName>
        <fullName evidence="1">ATP-AMP transphosphorylase</fullName>
    </alternativeName>
    <alternativeName>
        <fullName evidence="1">ATP:AMP phosphotransferase</fullName>
    </alternativeName>
    <alternativeName>
        <fullName evidence="1">Adenylate monophosphate kinase</fullName>
    </alternativeName>
</protein>
<proteinExistence type="inferred from homology"/>
<gene>
    <name evidence="1" type="primary">adk</name>
    <name type="ordered locus">BURPS668_0924</name>
</gene>
<evidence type="ECO:0000255" key="1">
    <source>
        <dbReference type="HAMAP-Rule" id="MF_00235"/>
    </source>
</evidence>
<sequence length="220" mass="24170">MRLILLGAPGAGKGTQANFIKEKFGIPQISTGDMLRAAVKAGTPLGVEAKTYMDEGKLVPDSLIIGLVKERLKEADCANGYLFDGFPRTIAQADAMKEAGVAIDYVLEIDVPFSEIIERMSGRRTHPASGRTYHVKFNPPKVEGKDDVTGEPLVQRDDDKEETVKKRLDVYEAQTKPLITYYGDWARRGAENGLKAPAYRKISGLGAVEEIRARVFDALK</sequence>
<dbReference type="EC" id="2.7.4.3" evidence="1"/>
<dbReference type="EMBL" id="CP000570">
    <property type="protein sequence ID" value="ABN84058.1"/>
    <property type="molecule type" value="Genomic_DNA"/>
</dbReference>
<dbReference type="RefSeq" id="WP_004185840.1">
    <property type="nucleotide sequence ID" value="NC_009074.1"/>
</dbReference>
<dbReference type="SMR" id="A3N6K4"/>
<dbReference type="GeneID" id="93059382"/>
<dbReference type="KEGG" id="bpd:BURPS668_0924"/>
<dbReference type="HOGENOM" id="CLU_032354_1_2_4"/>
<dbReference type="UniPathway" id="UPA00588">
    <property type="reaction ID" value="UER00649"/>
</dbReference>
<dbReference type="GO" id="GO:0005737">
    <property type="term" value="C:cytoplasm"/>
    <property type="evidence" value="ECO:0007669"/>
    <property type="project" value="UniProtKB-SubCell"/>
</dbReference>
<dbReference type="GO" id="GO:0004017">
    <property type="term" value="F:adenylate kinase activity"/>
    <property type="evidence" value="ECO:0007669"/>
    <property type="project" value="UniProtKB-UniRule"/>
</dbReference>
<dbReference type="GO" id="GO:0005524">
    <property type="term" value="F:ATP binding"/>
    <property type="evidence" value="ECO:0007669"/>
    <property type="project" value="UniProtKB-UniRule"/>
</dbReference>
<dbReference type="GO" id="GO:0044209">
    <property type="term" value="P:AMP salvage"/>
    <property type="evidence" value="ECO:0007669"/>
    <property type="project" value="UniProtKB-UniRule"/>
</dbReference>
<dbReference type="CDD" id="cd01428">
    <property type="entry name" value="ADK"/>
    <property type="match status" value="1"/>
</dbReference>
<dbReference type="FunFam" id="3.40.50.300:FF:000106">
    <property type="entry name" value="Adenylate kinase mitochondrial"/>
    <property type="match status" value="1"/>
</dbReference>
<dbReference type="Gene3D" id="3.40.50.300">
    <property type="entry name" value="P-loop containing nucleotide triphosphate hydrolases"/>
    <property type="match status" value="1"/>
</dbReference>
<dbReference type="HAMAP" id="MF_00235">
    <property type="entry name" value="Adenylate_kinase_Adk"/>
    <property type="match status" value="1"/>
</dbReference>
<dbReference type="InterPro" id="IPR006259">
    <property type="entry name" value="Adenyl_kin_sub"/>
</dbReference>
<dbReference type="InterPro" id="IPR000850">
    <property type="entry name" value="Adenylat/UMP-CMP_kin"/>
</dbReference>
<dbReference type="InterPro" id="IPR033690">
    <property type="entry name" value="Adenylat_kinase_CS"/>
</dbReference>
<dbReference type="InterPro" id="IPR007862">
    <property type="entry name" value="Adenylate_kinase_lid-dom"/>
</dbReference>
<dbReference type="InterPro" id="IPR027417">
    <property type="entry name" value="P-loop_NTPase"/>
</dbReference>
<dbReference type="NCBIfam" id="TIGR01351">
    <property type="entry name" value="adk"/>
    <property type="match status" value="1"/>
</dbReference>
<dbReference type="NCBIfam" id="NF001379">
    <property type="entry name" value="PRK00279.1-1"/>
    <property type="match status" value="1"/>
</dbReference>
<dbReference type="NCBIfam" id="NF001380">
    <property type="entry name" value="PRK00279.1-2"/>
    <property type="match status" value="1"/>
</dbReference>
<dbReference type="NCBIfam" id="NF001381">
    <property type="entry name" value="PRK00279.1-3"/>
    <property type="match status" value="1"/>
</dbReference>
<dbReference type="NCBIfam" id="NF011100">
    <property type="entry name" value="PRK14527.1"/>
    <property type="match status" value="1"/>
</dbReference>
<dbReference type="PANTHER" id="PTHR23359">
    <property type="entry name" value="NUCLEOTIDE KINASE"/>
    <property type="match status" value="1"/>
</dbReference>
<dbReference type="Pfam" id="PF00406">
    <property type="entry name" value="ADK"/>
    <property type="match status" value="1"/>
</dbReference>
<dbReference type="Pfam" id="PF05191">
    <property type="entry name" value="ADK_lid"/>
    <property type="match status" value="1"/>
</dbReference>
<dbReference type="PRINTS" id="PR00094">
    <property type="entry name" value="ADENYLTKNASE"/>
</dbReference>
<dbReference type="SUPFAM" id="SSF52540">
    <property type="entry name" value="P-loop containing nucleoside triphosphate hydrolases"/>
    <property type="match status" value="1"/>
</dbReference>
<dbReference type="PROSITE" id="PS00113">
    <property type="entry name" value="ADENYLATE_KINASE"/>
    <property type="match status" value="1"/>
</dbReference>
<reference key="1">
    <citation type="journal article" date="2010" name="Genome Biol. Evol.">
        <title>Continuing evolution of Burkholderia mallei through genome reduction and large-scale rearrangements.</title>
        <authorList>
            <person name="Losada L."/>
            <person name="Ronning C.M."/>
            <person name="DeShazer D."/>
            <person name="Woods D."/>
            <person name="Fedorova N."/>
            <person name="Kim H.S."/>
            <person name="Shabalina S.A."/>
            <person name="Pearson T.R."/>
            <person name="Brinkac L."/>
            <person name="Tan P."/>
            <person name="Nandi T."/>
            <person name="Crabtree J."/>
            <person name="Badger J."/>
            <person name="Beckstrom-Sternberg S."/>
            <person name="Saqib M."/>
            <person name="Schutzer S.E."/>
            <person name="Keim P."/>
            <person name="Nierman W.C."/>
        </authorList>
    </citation>
    <scope>NUCLEOTIDE SEQUENCE [LARGE SCALE GENOMIC DNA]</scope>
    <source>
        <strain>668</strain>
    </source>
</reference>
<comment type="function">
    <text evidence="1">Catalyzes the reversible transfer of the terminal phosphate group between ATP and AMP. Plays an important role in cellular energy homeostasis and in adenine nucleotide metabolism.</text>
</comment>
<comment type="catalytic activity">
    <reaction evidence="1">
        <text>AMP + ATP = 2 ADP</text>
        <dbReference type="Rhea" id="RHEA:12973"/>
        <dbReference type="ChEBI" id="CHEBI:30616"/>
        <dbReference type="ChEBI" id="CHEBI:456215"/>
        <dbReference type="ChEBI" id="CHEBI:456216"/>
        <dbReference type="EC" id="2.7.4.3"/>
    </reaction>
</comment>
<comment type="pathway">
    <text evidence="1">Purine metabolism; AMP biosynthesis via salvage pathway; AMP from ADP: step 1/1.</text>
</comment>
<comment type="subunit">
    <text evidence="1">Monomer.</text>
</comment>
<comment type="subcellular location">
    <subcellularLocation>
        <location evidence="1">Cytoplasm</location>
    </subcellularLocation>
</comment>
<comment type="domain">
    <text evidence="1">Consists of three domains, a large central CORE domain and two small peripheral domains, NMPbind and LID, which undergo movements during catalysis. The LID domain closes over the site of phosphoryl transfer upon ATP binding. Assembling and dissambling the active center during each catalytic cycle provides an effective means to prevent ATP hydrolysis.</text>
</comment>
<comment type="similarity">
    <text evidence="1">Belongs to the adenylate kinase family.</text>
</comment>
<feature type="chain" id="PRO_1000058803" description="Adenylate kinase">
    <location>
        <begin position="1"/>
        <end position="220"/>
    </location>
</feature>
<feature type="region of interest" description="NMP" evidence="1">
    <location>
        <begin position="30"/>
        <end position="59"/>
    </location>
</feature>
<feature type="region of interest" description="LID" evidence="1">
    <location>
        <begin position="122"/>
        <end position="159"/>
    </location>
</feature>
<feature type="binding site" evidence="1">
    <location>
        <begin position="10"/>
        <end position="15"/>
    </location>
    <ligand>
        <name>ATP</name>
        <dbReference type="ChEBI" id="CHEBI:30616"/>
    </ligand>
</feature>
<feature type="binding site" evidence="1">
    <location>
        <position position="31"/>
    </location>
    <ligand>
        <name>AMP</name>
        <dbReference type="ChEBI" id="CHEBI:456215"/>
    </ligand>
</feature>
<feature type="binding site" evidence="1">
    <location>
        <position position="36"/>
    </location>
    <ligand>
        <name>AMP</name>
        <dbReference type="ChEBI" id="CHEBI:456215"/>
    </ligand>
</feature>
<feature type="binding site" evidence="1">
    <location>
        <begin position="57"/>
        <end position="59"/>
    </location>
    <ligand>
        <name>AMP</name>
        <dbReference type="ChEBI" id="CHEBI:456215"/>
    </ligand>
</feature>
<feature type="binding site" evidence="1">
    <location>
        <begin position="85"/>
        <end position="88"/>
    </location>
    <ligand>
        <name>AMP</name>
        <dbReference type="ChEBI" id="CHEBI:456215"/>
    </ligand>
</feature>
<feature type="binding site" evidence="1">
    <location>
        <position position="92"/>
    </location>
    <ligand>
        <name>AMP</name>
        <dbReference type="ChEBI" id="CHEBI:456215"/>
    </ligand>
</feature>
<feature type="binding site" evidence="1">
    <location>
        <position position="123"/>
    </location>
    <ligand>
        <name>ATP</name>
        <dbReference type="ChEBI" id="CHEBI:30616"/>
    </ligand>
</feature>
<feature type="binding site" evidence="1">
    <location>
        <begin position="132"/>
        <end position="133"/>
    </location>
    <ligand>
        <name>ATP</name>
        <dbReference type="ChEBI" id="CHEBI:30616"/>
    </ligand>
</feature>
<feature type="binding site" evidence="1">
    <location>
        <position position="156"/>
    </location>
    <ligand>
        <name>AMP</name>
        <dbReference type="ChEBI" id="CHEBI:456215"/>
    </ligand>
</feature>
<feature type="binding site" evidence="1">
    <location>
        <position position="167"/>
    </location>
    <ligand>
        <name>AMP</name>
        <dbReference type="ChEBI" id="CHEBI:456215"/>
    </ligand>
</feature>
<feature type="binding site" evidence="1">
    <location>
        <position position="206"/>
    </location>
    <ligand>
        <name>ATP</name>
        <dbReference type="ChEBI" id="CHEBI:30616"/>
    </ligand>
</feature>
<keyword id="KW-0067">ATP-binding</keyword>
<keyword id="KW-0963">Cytoplasm</keyword>
<keyword id="KW-0418">Kinase</keyword>
<keyword id="KW-0545">Nucleotide biosynthesis</keyword>
<keyword id="KW-0547">Nucleotide-binding</keyword>
<keyword id="KW-0808">Transferase</keyword>
<name>KAD_BURP6</name>